<dbReference type="EMBL" id="AK039147">
    <property type="protein sequence ID" value="BAC30254.1"/>
    <property type="molecule type" value="mRNA"/>
</dbReference>
<dbReference type="EMBL" id="AK054428">
    <property type="protein sequence ID" value="BAC35776.1"/>
    <property type="molecule type" value="mRNA"/>
</dbReference>
<dbReference type="EMBL" id="AC150745">
    <property type="status" value="NOT_ANNOTATED_CDS"/>
    <property type="molecule type" value="Genomic_DNA"/>
</dbReference>
<dbReference type="CCDS" id="CCDS39756.1"/>
<dbReference type="RefSeq" id="NP_666291.2">
    <property type="nucleotide sequence ID" value="NM_146179.2"/>
</dbReference>
<dbReference type="SMR" id="Q8BFS8"/>
<dbReference type="STRING" id="10090.ENSMUSP00000057159"/>
<dbReference type="iPTMnet" id="Q8BFS8"/>
<dbReference type="PhosphoSitePlus" id="Q8BFS8"/>
<dbReference type="PaxDb" id="10090-ENSMUSP00000057159"/>
<dbReference type="DNASU" id="232854"/>
<dbReference type="Ensembl" id="ENSMUST00000051435.8">
    <property type="protein sequence ID" value="ENSMUSP00000057159.8"/>
    <property type="gene ID" value="ENSMUSG00000034538.9"/>
</dbReference>
<dbReference type="GeneID" id="232854"/>
<dbReference type="KEGG" id="mmu:232854"/>
<dbReference type="UCSC" id="uc009fck.1">
    <property type="organism name" value="mouse"/>
</dbReference>
<dbReference type="AGR" id="MGI:2444763"/>
<dbReference type="CTD" id="232854"/>
<dbReference type="MGI" id="MGI:2444763">
    <property type="gene designation" value="Zfp418"/>
</dbReference>
<dbReference type="VEuPathDB" id="HostDB:ENSMUSG00000034538"/>
<dbReference type="eggNOG" id="KOG1721">
    <property type="taxonomic scope" value="Eukaryota"/>
</dbReference>
<dbReference type="GeneTree" id="ENSGT00950000183169"/>
<dbReference type="HOGENOM" id="CLU_002678_44_5_1"/>
<dbReference type="OMA" id="PRCTEAG"/>
<dbReference type="OrthoDB" id="427030at2759"/>
<dbReference type="TreeFam" id="TF339848"/>
<dbReference type="Reactome" id="R-MMU-212436">
    <property type="pathway name" value="Generic Transcription Pathway"/>
</dbReference>
<dbReference type="BioGRID-ORCS" id="232854">
    <property type="hits" value="3 hits in 77 CRISPR screens"/>
</dbReference>
<dbReference type="PRO" id="PR:Q8BFS8"/>
<dbReference type="Proteomes" id="UP000000589">
    <property type="component" value="Chromosome 7"/>
</dbReference>
<dbReference type="RNAct" id="Q8BFS8">
    <property type="molecule type" value="protein"/>
</dbReference>
<dbReference type="Bgee" id="ENSMUSG00000034538">
    <property type="expression patterns" value="Expressed in undifferentiated genital tubercle and 111 other cell types or tissues"/>
</dbReference>
<dbReference type="GO" id="GO:0005634">
    <property type="term" value="C:nucleus"/>
    <property type="evidence" value="ECO:0000314"/>
    <property type="project" value="UniProtKB"/>
</dbReference>
<dbReference type="GO" id="GO:0001217">
    <property type="term" value="F:DNA-binding transcription repressor activity"/>
    <property type="evidence" value="ECO:0000250"/>
    <property type="project" value="UniProtKB"/>
</dbReference>
<dbReference type="GO" id="GO:0008270">
    <property type="term" value="F:zinc ion binding"/>
    <property type="evidence" value="ECO:0007669"/>
    <property type="project" value="UniProtKB-KW"/>
</dbReference>
<dbReference type="GO" id="GO:0003300">
    <property type="term" value="P:cardiac muscle hypertrophy"/>
    <property type="evidence" value="ECO:0000315"/>
    <property type="project" value="MGI"/>
</dbReference>
<dbReference type="GO" id="GO:0016237">
    <property type="term" value="P:microautophagy"/>
    <property type="evidence" value="ECO:0000315"/>
    <property type="project" value="UniProtKB"/>
</dbReference>
<dbReference type="GO" id="GO:0061052">
    <property type="term" value="P:negative regulation of cell growth involved in cardiac muscle cell development"/>
    <property type="evidence" value="ECO:0000314"/>
    <property type="project" value="MGI"/>
</dbReference>
<dbReference type="GO" id="GO:0032434">
    <property type="term" value="P:regulation of proteasomal ubiquitin-dependent protein catabolic process"/>
    <property type="evidence" value="ECO:0000315"/>
    <property type="project" value="UniProtKB"/>
</dbReference>
<dbReference type="CDD" id="cd07765">
    <property type="entry name" value="KRAB_A-box"/>
    <property type="match status" value="1"/>
</dbReference>
<dbReference type="FunFam" id="3.30.160.60:FF:000295">
    <property type="entry name" value="zinc finger protein 19"/>
    <property type="match status" value="1"/>
</dbReference>
<dbReference type="FunFam" id="3.30.160.60:FF:001530">
    <property type="entry name" value="Zinc finger protein 268"/>
    <property type="match status" value="1"/>
</dbReference>
<dbReference type="FunFam" id="3.30.160.60:FF:000128">
    <property type="entry name" value="zinc finger protein 268 isoform X1"/>
    <property type="match status" value="1"/>
</dbReference>
<dbReference type="FunFam" id="3.30.160.60:FF:002343">
    <property type="entry name" value="Zinc finger protein 33A"/>
    <property type="match status" value="5"/>
</dbReference>
<dbReference type="FunFam" id="3.30.160.60:FF:000187">
    <property type="entry name" value="zinc finger protein 37 homolog"/>
    <property type="match status" value="1"/>
</dbReference>
<dbReference type="FunFam" id="3.30.160.60:FF:001498">
    <property type="entry name" value="Zinc finger protein 404"/>
    <property type="match status" value="1"/>
</dbReference>
<dbReference type="FunFam" id="3.30.160.60:FF:000281">
    <property type="entry name" value="Zinc finger protein 558 isoform X1"/>
    <property type="match status" value="1"/>
</dbReference>
<dbReference type="FunFam" id="3.30.160.60:FF:001270">
    <property type="entry name" value="zinc finger protein 583 isoform X1"/>
    <property type="match status" value="1"/>
</dbReference>
<dbReference type="FunFam" id="3.30.160.60:FF:000098">
    <property type="entry name" value="Zinc finger protein 614"/>
    <property type="match status" value="1"/>
</dbReference>
<dbReference type="FunFam" id="3.30.160.60:FF:002533">
    <property type="entry name" value="Zinc finger protein 770"/>
    <property type="match status" value="1"/>
</dbReference>
<dbReference type="Gene3D" id="6.10.140.140">
    <property type="match status" value="1"/>
</dbReference>
<dbReference type="Gene3D" id="3.30.160.60">
    <property type="entry name" value="Classic Zinc Finger"/>
    <property type="match status" value="14"/>
</dbReference>
<dbReference type="InterPro" id="IPR001909">
    <property type="entry name" value="KRAB"/>
</dbReference>
<dbReference type="InterPro" id="IPR036051">
    <property type="entry name" value="KRAB_dom_sf"/>
</dbReference>
<dbReference type="InterPro" id="IPR050331">
    <property type="entry name" value="Zinc_finger"/>
</dbReference>
<dbReference type="InterPro" id="IPR036236">
    <property type="entry name" value="Znf_C2H2_sf"/>
</dbReference>
<dbReference type="InterPro" id="IPR013087">
    <property type="entry name" value="Znf_C2H2_type"/>
</dbReference>
<dbReference type="PANTHER" id="PTHR16515">
    <property type="entry name" value="PR DOMAIN ZINC FINGER PROTEIN"/>
    <property type="match status" value="1"/>
</dbReference>
<dbReference type="PANTHER" id="PTHR16515:SF58">
    <property type="entry name" value="ZINC FINGER PROTEIN 22"/>
    <property type="match status" value="1"/>
</dbReference>
<dbReference type="Pfam" id="PF01352">
    <property type="entry name" value="KRAB"/>
    <property type="match status" value="1"/>
</dbReference>
<dbReference type="Pfam" id="PF00096">
    <property type="entry name" value="zf-C2H2"/>
    <property type="match status" value="14"/>
</dbReference>
<dbReference type="SMART" id="SM00349">
    <property type="entry name" value="KRAB"/>
    <property type="match status" value="1"/>
</dbReference>
<dbReference type="SMART" id="SM00355">
    <property type="entry name" value="ZnF_C2H2"/>
    <property type="match status" value="14"/>
</dbReference>
<dbReference type="SUPFAM" id="SSF57667">
    <property type="entry name" value="beta-beta-alpha zinc fingers"/>
    <property type="match status" value="8"/>
</dbReference>
<dbReference type="SUPFAM" id="SSF109640">
    <property type="entry name" value="KRAB domain (Kruppel-associated box)"/>
    <property type="match status" value="1"/>
</dbReference>
<dbReference type="PROSITE" id="PS50805">
    <property type="entry name" value="KRAB"/>
    <property type="match status" value="1"/>
</dbReference>
<dbReference type="PROSITE" id="PS00028">
    <property type="entry name" value="ZINC_FINGER_C2H2_1"/>
    <property type="match status" value="14"/>
</dbReference>
<dbReference type="PROSITE" id="PS50157">
    <property type="entry name" value="ZINC_FINGER_C2H2_2"/>
    <property type="match status" value="14"/>
</dbReference>
<proteinExistence type="evidence at transcript level"/>
<comment type="function">
    <text evidence="1 4">Transcriptional repressor (By similarity). May play a role as regulator of the ubiquitin-proteasome system and autophagy-lysosomal pathway (PubMed:33249983).</text>
</comment>
<comment type="subcellular location">
    <subcellularLocation>
        <location evidence="4">Nucleus</location>
    </subcellularLocation>
</comment>
<comment type="similarity">
    <text evidence="5">Belongs to the krueppel C2H2-type zinc-finger protein family.</text>
</comment>
<reference key="1">
    <citation type="journal article" date="2005" name="Science">
        <title>The transcriptional landscape of the mammalian genome.</title>
        <authorList>
            <person name="Carninci P."/>
            <person name="Kasukawa T."/>
            <person name="Katayama S."/>
            <person name="Gough J."/>
            <person name="Frith M.C."/>
            <person name="Maeda N."/>
            <person name="Oyama R."/>
            <person name="Ravasi T."/>
            <person name="Lenhard B."/>
            <person name="Wells C."/>
            <person name="Kodzius R."/>
            <person name="Shimokawa K."/>
            <person name="Bajic V.B."/>
            <person name="Brenner S.E."/>
            <person name="Batalov S."/>
            <person name="Forrest A.R."/>
            <person name="Zavolan M."/>
            <person name="Davis M.J."/>
            <person name="Wilming L.G."/>
            <person name="Aidinis V."/>
            <person name="Allen J.E."/>
            <person name="Ambesi-Impiombato A."/>
            <person name="Apweiler R."/>
            <person name="Aturaliya R.N."/>
            <person name="Bailey T.L."/>
            <person name="Bansal M."/>
            <person name="Baxter L."/>
            <person name="Beisel K.W."/>
            <person name="Bersano T."/>
            <person name="Bono H."/>
            <person name="Chalk A.M."/>
            <person name="Chiu K.P."/>
            <person name="Choudhary V."/>
            <person name="Christoffels A."/>
            <person name="Clutterbuck D.R."/>
            <person name="Crowe M.L."/>
            <person name="Dalla E."/>
            <person name="Dalrymple B.P."/>
            <person name="de Bono B."/>
            <person name="Della Gatta G."/>
            <person name="di Bernardo D."/>
            <person name="Down T."/>
            <person name="Engstrom P."/>
            <person name="Fagiolini M."/>
            <person name="Faulkner G."/>
            <person name="Fletcher C.F."/>
            <person name="Fukushima T."/>
            <person name="Furuno M."/>
            <person name="Futaki S."/>
            <person name="Gariboldi M."/>
            <person name="Georgii-Hemming P."/>
            <person name="Gingeras T.R."/>
            <person name="Gojobori T."/>
            <person name="Green R.E."/>
            <person name="Gustincich S."/>
            <person name="Harbers M."/>
            <person name="Hayashi Y."/>
            <person name="Hensch T.K."/>
            <person name="Hirokawa N."/>
            <person name="Hill D."/>
            <person name="Huminiecki L."/>
            <person name="Iacono M."/>
            <person name="Ikeo K."/>
            <person name="Iwama A."/>
            <person name="Ishikawa T."/>
            <person name="Jakt M."/>
            <person name="Kanapin A."/>
            <person name="Katoh M."/>
            <person name="Kawasawa Y."/>
            <person name="Kelso J."/>
            <person name="Kitamura H."/>
            <person name="Kitano H."/>
            <person name="Kollias G."/>
            <person name="Krishnan S.P."/>
            <person name="Kruger A."/>
            <person name="Kummerfeld S.K."/>
            <person name="Kurochkin I.V."/>
            <person name="Lareau L.F."/>
            <person name="Lazarevic D."/>
            <person name="Lipovich L."/>
            <person name="Liu J."/>
            <person name="Liuni S."/>
            <person name="McWilliam S."/>
            <person name="Madan Babu M."/>
            <person name="Madera M."/>
            <person name="Marchionni L."/>
            <person name="Matsuda H."/>
            <person name="Matsuzawa S."/>
            <person name="Miki H."/>
            <person name="Mignone F."/>
            <person name="Miyake S."/>
            <person name="Morris K."/>
            <person name="Mottagui-Tabar S."/>
            <person name="Mulder N."/>
            <person name="Nakano N."/>
            <person name="Nakauchi H."/>
            <person name="Ng P."/>
            <person name="Nilsson R."/>
            <person name="Nishiguchi S."/>
            <person name="Nishikawa S."/>
            <person name="Nori F."/>
            <person name="Ohara O."/>
            <person name="Okazaki Y."/>
            <person name="Orlando V."/>
            <person name="Pang K.C."/>
            <person name="Pavan W.J."/>
            <person name="Pavesi G."/>
            <person name="Pesole G."/>
            <person name="Petrovsky N."/>
            <person name="Piazza S."/>
            <person name="Reed J."/>
            <person name="Reid J.F."/>
            <person name="Ring B.Z."/>
            <person name="Ringwald M."/>
            <person name="Rost B."/>
            <person name="Ruan Y."/>
            <person name="Salzberg S.L."/>
            <person name="Sandelin A."/>
            <person name="Schneider C."/>
            <person name="Schoenbach C."/>
            <person name="Sekiguchi K."/>
            <person name="Semple C.A."/>
            <person name="Seno S."/>
            <person name="Sessa L."/>
            <person name="Sheng Y."/>
            <person name="Shibata Y."/>
            <person name="Shimada H."/>
            <person name="Shimada K."/>
            <person name="Silva D."/>
            <person name="Sinclair B."/>
            <person name="Sperling S."/>
            <person name="Stupka E."/>
            <person name="Sugiura K."/>
            <person name="Sultana R."/>
            <person name="Takenaka Y."/>
            <person name="Taki K."/>
            <person name="Tammoja K."/>
            <person name="Tan S.L."/>
            <person name="Tang S."/>
            <person name="Taylor M.S."/>
            <person name="Tegner J."/>
            <person name="Teichmann S.A."/>
            <person name="Ueda H.R."/>
            <person name="van Nimwegen E."/>
            <person name="Verardo R."/>
            <person name="Wei C.L."/>
            <person name="Yagi K."/>
            <person name="Yamanishi H."/>
            <person name="Zabarovsky E."/>
            <person name="Zhu S."/>
            <person name="Zimmer A."/>
            <person name="Hide W."/>
            <person name="Bult C."/>
            <person name="Grimmond S.M."/>
            <person name="Teasdale R.D."/>
            <person name="Liu E.T."/>
            <person name="Brusic V."/>
            <person name="Quackenbush J."/>
            <person name="Wahlestedt C."/>
            <person name="Mattick J.S."/>
            <person name="Hume D.A."/>
            <person name="Kai C."/>
            <person name="Sasaki D."/>
            <person name="Tomaru Y."/>
            <person name="Fukuda S."/>
            <person name="Kanamori-Katayama M."/>
            <person name="Suzuki M."/>
            <person name="Aoki J."/>
            <person name="Arakawa T."/>
            <person name="Iida J."/>
            <person name="Imamura K."/>
            <person name="Itoh M."/>
            <person name="Kato T."/>
            <person name="Kawaji H."/>
            <person name="Kawagashira N."/>
            <person name="Kawashima T."/>
            <person name="Kojima M."/>
            <person name="Kondo S."/>
            <person name="Konno H."/>
            <person name="Nakano K."/>
            <person name="Ninomiya N."/>
            <person name="Nishio T."/>
            <person name="Okada M."/>
            <person name="Plessy C."/>
            <person name="Shibata K."/>
            <person name="Shiraki T."/>
            <person name="Suzuki S."/>
            <person name="Tagami M."/>
            <person name="Waki K."/>
            <person name="Watahiki A."/>
            <person name="Okamura-Oho Y."/>
            <person name="Suzuki H."/>
            <person name="Kawai J."/>
            <person name="Hayashizaki Y."/>
        </authorList>
    </citation>
    <scope>NUCLEOTIDE SEQUENCE [LARGE SCALE MRNA]</scope>
</reference>
<reference key="2">
    <citation type="journal article" date="2009" name="PLoS Biol.">
        <title>Lineage-specific biology revealed by a finished genome assembly of the mouse.</title>
        <authorList>
            <person name="Church D.M."/>
            <person name="Goodstadt L."/>
            <person name="Hillier L.W."/>
            <person name="Zody M.C."/>
            <person name="Goldstein S."/>
            <person name="She X."/>
            <person name="Bult C.J."/>
            <person name="Agarwala R."/>
            <person name="Cherry J.L."/>
            <person name="DiCuccio M."/>
            <person name="Hlavina W."/>
            <person name="Kapustin Y."/>
            <person name="Meric P."/>
            <person name="Maglott D."/>
            <person name="Birtle Z."/>
            <person name="Marques A.C."/>
            <person name="Graves T."/>
            <person name="Zhou S."/>
            <person name="Teague B."/>
            <person name="Potamousis K."/>
            <person name="Churas C."/>
            <person name="Place M."/>
            <person name="Herschleb J."/>
            <person name="Runnheim R."/>
            <person name="Forrest D."/>
            <person name="Amos-Landgraf J."/>
            <person name="Schwartz D.C."/>
            <person name="Cheng Z."/>
            <person name="Lindblad-Toh K."/>
            <person name="Eichler E.E."/>
            <person name="Ponting C.P."/>
        </authorList>
    </citation>
    <scope>NUCLEOTIDE SEQUENCE [LARGE SCALE GENOMIC DNA]</scope>
    <source>
        <strain>C57BL/6J</strain>
    </source>
</reference>
<reference key="3">
    <citation type="journal article" date="2021" name="Autophagy">
        <title>A high-throughput screening identifies ZNF418 as a novel regulator of the ubiquitin-proteasome system and autophagy-lysosomal pathway.</title>
        <authorList>
            <person name="Singh S.R."/>
            <person name="Meyer-Jens M."/>
            <person name="Alizoti E."/>
            <person name="Bacon W.C."/>
            <person name="Davis G."/>
            <person name="Osinska H."/>
            <person name="Gulick J."/>
            <person name="Reischmann-Duesener S."/>
            <person name="Orthey E."/>
            <person name="McLendon P.M."/>
            <person name="Molkentin J.D."/>
            <person name="Schlossarek S."/>
            <person name="Robbins J."/>
            <person name="Carrier L."/>
        </authorList>
    </citation>
    <scope>FUNCTION</scope>
    <scope>SUBCELLULAR LOCATION</scope>
</reference>
<organism>
    <name type="scientific">Mus musculus</name>
    <name type="common">Mouse</name>
    <dbReference type="NCBI Taxonomy" id="10090"/>
    <lineage>
        <taxon>Eukaryota</taxon>
        <taxon>Metazoa</taxon>
        <taxon>Chordata</taxon>
        <taxon>Craniata</taxon>
        <taxon>Vertebrata</taxon>
        <taxon>Euteleostomi</taxon>
        <taxon>Mammalia</taxon>
        <taxon>Eutheria</taxon>
        <taxon>Euarchontoglires</taxon>
        <taxon>Glires</taxon>
        <taxon>Rodentia</taxon>
        <taxon>Myomorpha</taxon>
        <taxon>Muroidea</taxon>
        <taxon>Muridae</taxon>
        <taxon>Murinae</taxon>
        <taxon>Mus</taxon>
        <taxon>Mus</taxon>
    </lineage>
</organism>
<name>ZN418_MOUSE</name>
<accession>Q8BFS8</accession>
<sequence>MAALKHLAQVPRSTEKGMVCIQGCVTFEDVAVYFSQEEWELLDESQRLLYLDVMLENFTLITSLAHWSEAEAEDKTCAPQIRTAKEGLPTKKPHPSDICSTVLKDILHLSDLPGQKPHLTEVCTDLLDQKHHRAKNWLKKDVDSLVKNCIFHVAGNPSVCSKIGEKFPAVWNLLQPKAIPKGEKQNQIKCRKAFHSEKNNSKSDKYNKSSSPQHRLHEYPRLCSGKEGFESNSCEQDLNKYSIAPSQTDQTENRPYGCHDCGKWFGQKATLRIHQRRHTGEKPYRCGECGKSFCQSSNLSEHCRVHSGERPFECLECGKAFGCHSSLLRHQRTHTGEWPYECGDCGRLFRQIVSLITHQRTHTTEKPYECGQCEKSFSHKATLTVHQRVHTGEKPYHCEACGKSFSQSANLIKHSKIHTGEKPYKCGECGLCFRQRATLMKHQRTHTSERPYECRECGKFFKQYFYLIEHSRIHTTTEFYECGQCGKSYTQNATLIRHQRVHTGESPYKCKECGKAFEYKSRLNRHQRTHTGERPYECAKCGKFFRESYNLAEHQKIHTKAKPYNCDQCGKCFSRRADLVKHQRVHTGERPYTCGECGKTFSRTTNLVQHRRIHTGERPYECDQCGKSFSQVSTLTRHQLLHTGEKSYKCSK</sequence>
<keyword id="KW-0479">Metal-binding</keyword>
<keyword id="KW-0539">Nucleus</keyword>
<keyword id="KW-1185">Reference proteome</keyword>
<keyword id="KW-0677">Repeat</keyword>
<keyword id="KW-0862">Zinc</keyword>
<keyword id="KW-0863">Zinc-finger</keyword>
<protein>
    <recommendedName>
        <fullName evidence="5">Zinc finger protein 418</fullName>
    </recommendedName>
</protein>
<gene>
    <name evidence="1" type="primary">ZNF418</name>
    <name evidence="6" type="synonym">Zfp418</name>
</gene>
<feature type="chain" id="PRO_0000458876" description="Zinc finger protein 418">
    <location>
        <begin position="1"/>
        <end position="652"/>
    </location>
</feature>
<feature type="domain" description="KRAB" evidence="3">
    <location>
        <begin position="25"/>
        <end position="100"/>
    </location>
</feature>
<feature type="zinc finger region" description="C2H2-type 1" evidence="2">
    <location>
        <begin position="256"/>
        <end position="278"/>
    </location>
</feature>
<feature type="zinc finger region" description="C2H2-type 2" evidence="2">
    <location>
        <begin position="284"/>
        <end position="306"/>
    </location>
</feature>
<feature type="zinc finger region" description="C2H2-type 3" evidence="2">
    <location>
        <begin position="312"/>
        <end position="334"/>
    </location>
</feature>
<feature type="zinc finger region" description="C2H2-type 4" evidence="2">
    <location>
        <begin position="340"/>
        <end position="362"/>
    </location>
</feature>
<feature type="zinc finger region" description="C2H2-type 5" evidence="2">
    <location>
        <begin position="368"/>
        <end position="390"/>
    </location>
</feature>
<feature type="zinc finger region" description="C2H2-type 6" evidence="2">
    <location>
        <begin position="396"/>
        <end position="418"/>
    </location>
</feature>
<feature type="zinc finger region" description="C2H2-type 7" evidence="2">
    <location>
        <begin position="424"/>
        <end position="446"/>
    </location>
</feature>
<feature type="zinc finger region" description="C2H2-type 8" evidence="2">
    <location>
        <begin position="452"/>
        <end position="474"/>
    </location>
</feature>
<feature type="zinc finger region" description="C2H2-type 9" evidence="2">
    <location>
        <begin position="480"/>
        <end position="502"/>
    </location>
</feature>
<feature type="zinc finger region" description="C2H2-type 10" evidence="2">
    <location>
        <begin position="508"/>
        <end position="530"/>
    </location>
</feature>
<feature type="zinc finger region" description="C2H2-type 11" evidence="2">
    <location>
        <begin position="536"/>
        <end position="558"/>
    </location>
</feature>
<feature type="zinc finger region" description="C2H2-type 12" evidence="2">
    <location>
        <begin position="564"/>
        <end position="586"/>
    </location>
</feature>
<feature type="zinc finger region" description="C2H2-type 13" evidence="2">
    <location>
        <begin position="592"/>
        <end position="614"/>
    </location>
</feature>
<feature type="zinc finger region" description="C2H2-type 14" evidence="2">
    <location>
        <begin position="620"/>
        <end position="642"/>
    </location>
</feature>
<evidence type="ECO:0000250" key="1">
    <source>
        <dbReference type="UniProtKB" id="Q8TF45"/>
    </source>
</evidence>
<evidence type="ECO:0000255" key="2">
    <source>
        <dbReference type="PROSITE-ProRule" id="PRU00042"/>
    </source>
</evidence>
<evidence type="ECO:0000255" key="3">
    <source>
        <dbReference type="PROSITE-ProRule" id="PRU00119"/>
    </source>
</evidence>
<evidence type="ECO:0000269" key="4">
    <source>
    </source>
</evidence>
<evidence type="ECO:0000305" key="5"/>
<evidence type="ECO:0000312" key="6">
    <source>
        <dbReference type="MGI" id="MGI:2444763"/>
    </source>
</evidence>